<gene>
    <name evidence="1" type="primary">leuA</name>
    <name type="ordered locus">Blon_0170</name>
    <name type="ordered locus">BLIJ_0173</name>
</gene>
<name>LEU1_BIFLS</name>
<sequence length="638" mass="70506">MGQDQSSVFDLAAVAAASNGGNNDPLLPPARFIGDPQKPSRMPYNKYASYSEQIPFDYPERTWPGKRLQRAPRWCSVDLRDGNQALVNPMDSERKLRFWNLLVSMGFKEIEVGFPSASETDFDFIRMLIERELIPDDVTIVVLTQCREHLIRRTYEALKGAKRAIVHFYNSVSVLQREVVFRKNKEEIKKLATDAAELCKDLENEAKGIDLYYEYSPESFTGTEPEYAVEVCNAVIGVIKPTPEHPMIINLPATVEMTTPNVFADEVEYVSTHLDDRDSVVLSLHPHNDEGMGVAATELAVLAGADRVEGCLLGNGERTGNVDLVTLGLNWLTQGIDPQLDLSNVPEIRKTVEYCNQIKISERHPYAGNFVFTAFSGSHQDAIKKGLEARQVAAERAGADLDSFVWLVPYLPIDPKDIGRTYEAIIRVNSQSGKGGMAYLLKTNHNLDLPKRLQIEFDKIVQNYADTTKKEVKDGDIWRLFKDEYLPVEQSGMTAAGVVVGDTHDASLEPWGRLKLLKVAVSSGEDGSDTVLKARLLDRGVNVGDDEPVEREASGIGNGPIAAFLNAISNFGVEASIMDYVEHTMSVGTDAMAASYVECQIGEADDAQIVWGVGIDSSITTSALKAIISAINRSQRQR</sequence>
<comment type="function">
    <text evidence="1">Catalyzes the condensation of the acetyl group of acetyl-CoA with 3-methyl-2-oxobutanoate (2-ketoisovalerate) to form 3-carboxy-3-hydroxy-4-methylpentanoate (2-isopropylmalate).</text>
</comment>
<comment type="catalytic activity">
    <reaction evidence="1">
        <text>3-methyl-2-oxobutanoate + acetyl-CoA + H2O = (2S)-2-isopropylmalate + CoA + H(+)</text>
        <dbReference type="Rhea" id="RHEA:21524"/>
        <dbReference type="ChEBI" id="CHEBI:1178"/>
        <dbReference type="ChEBI" id="CHEBI:11851"/>
        <dbReference type="ChEBI" id="CHEBI:15377"/>
        <dbReference type="ChEBI" id="CHEBI:15378"/>
        <dbReference type="ChEBI" id="CHEBI:57287"/>
        <dbReference type="ChEBI" id="CHEBI:57288"/>
        <dbReference type="EC" id="2.3.3.13"/>
    </reaction>
</comment>
<comment type="cofactor">
    <cofactor evidence="1">
        <name>Mg(2+)</name>
        <dbReference type="ChEBI" id="CHEBI:18420"/>
    </cofactor>
</comment>
<comment type="pathway">
    <text evidence="1">Amino-acid biosynthesis; L-leucine biosynthesis; L-leucine from 3-methyl-2-oxobutanoate: step 1/4.</text>
</comment>
<comment type="subunit">
    <text evidence="1">Homodimer.</text>
</comment>
<comment type="subcellular location">
    <subcellularLocation>
        <location evidence="1">Cytoplasm</location>
    </subcellularLocation>
</comment>
<comment type="similarity">
    <text evidence="1">Belongs to the alpha-IPM synthase/homocitrate synthase family. LeuA type 2 subfamily.</text>
</comment>
<proteinExistence type="inferred from homology"/>
<protein>
    <recommendedName>
        <fullName evidence="1">2-isopropylmalate synthase</fullName>
        <ecNumber evidence="1">2.3.3.13</ecNumber>
    </recommendedName>
    <alternativeName>
        <fullName evidence="1">Alpha-IPM synthase</fullName>
    </alternativeName>
    <alternativeName>
        <fullName evidence="1">Alpha-isopropylmalate synthase</fullName>
    </alternativeName>
</protein>
<feature type="chain" id="PRO_0000406871" description="2-isopropylmalate synthase">
    <location>
        <begin position="1"/>
        <end position="638"/>
    </location>
</feature>
<feature type="domain" description="Pyruvate carboxyltransferase" evidence="1">
    <location>
        <begin position="72"/>
        <end position="346"/>
    </location>
</feature>
<feature type="region of interest" description="Regulatory domain" evidence="1">
    <location>
        <begin position="488"/>
        <end position="638"/>
    </location>
</feature>
<feature type="binding site" evidence="1">
    <location>
        <position position="81"/>
    </location>
    <ligand>
        <name>Mg(2+)</name>
        <dbReference type="ChEBI" id="CHEBI:18420"/>
    </ligand>
</feature>
<feature type="binding site" evidence="1">
    <location>
        <position position="285"/>
    </location>
    <ligand>
        <name>Mg(2+)</name>
        <dbReference type="ChEBI" id="CHEBI:18420"/>
    </ligand>
</feature>
<feature type="binding site" evidence="1">
    <location>
        <position position="287"/>
    </location>
    <ligand>
        <name>Mg(2+)</name>
        <dbReference type="ChEBI" id="CHEBI:18420"/>
    </ligand>
</feature>
<feature type="binding site" evidence="1">
    <location>
        <position position="321"/>
    </location>
    <ligand>
        <name>Mg(2+)</name>
        <dbReference type="ChEBI" id="CHEBI:18420"/>
    </ligand>
</feature>
<keyword id="KW-0028">Amino-acid biosynthesis</keyword>
<keyword id="KW-0100">Branched-chain amino acid biosynthesis</keyword>
<keyword id="KW-0963">Cytoplasm</keyword>
<keyword id="KW-0432">Leucine biosynthesis</keyword>
<keyword id="KW-0460">Magnesium</keyword>
<keyword id="KW-0479">Metal-binding</keyword>
<keyword id="KW-0808">Transferase</keyword>
<dbReference type="EC" id="2.3.3.13" evidence="1"/>
<dbReference type="EMBL" id="CP001095">
    <property type="protein sequence ID" value="ACJ51299.1"/>
    <property type="molecule type" value="Genomic_DNA"/>
</dbReference>
<dbReference type="EMBL" id="AP010889">
    <property type="protein sequence ID" value="BAJ67767.1"/>
    <property type="molecule type" value="Genomic_DNA"/>
</dbReference>
<dbReference type="RefSeq" id="WP_012576620.1">
    <property type="nucleotide sequence ID" value="NZ_JDTT01000001.1"/>
</dbReference>
<dbReference type="SMR" id="B7GT76"/>
<dbReference type="KEGG" id="bln:Blon_0170"/>
<dbReference type="KEGG" id="blon:BLIJ_0173"/>
<dbReference type="PATRIC" id="fig|391904.8.peg.174"/>
<dbReference type="HOGENOM" id="CLU_004588_3_2_11"/>
<dbReference type="UniPathway" id="UPA00048">
    <property type="reaction ID" value="UER00070"/>
</dbReference>
<dbReference type="Proteomes" id="UP000001360">
    <property type="component" value="Chromosome"/>
</dbReference>
<dbReference type="GO" id="GO:0005737">
    <property type="term" value="C:cytoplasm"/>
    <property type="evidence" value="ECO:0007669"/>
    <property type="project" value="UniProtKB-SubCell"/>
</dbReference>
<dbReference type="GO" id="GO:0003852">
    <property type="term" value="F:2-isopropylmalate synthase activity"/>
    <property type="evidence" value="ECO:0007669"/>
    <property type="project" value="UniProtKB-UniRule"/>
</dbReference>
<dbReference type="GO" id="GO:0003985">
    <property type="term" value="F:acetyl-CoA C-acetyltransferase activity"/>
    <property type="evidence" value="ECO:0007669"/>
    <property type="project" value="UniProtKB-UniRule"/>
</dbReference>
<dbReference type="GO" id="GO:0000287">
    <property type="term" value="F:magnesium ion binding"/>
    <property type="evidence" value="ECO:0007669"/>
    <property type="project" value="UniProtKB-UniRule"/>
</dbReference>
<dbReference type="GO" id="GO:0009098">
    <property type="term" value="P:L-leucine biosynthetic process"/>
    <property type="evidence" value="ECO:0007669"/>
    <property type="project" value="UniProtKB-UniRule"/>
</dbReference>
<dbReference type="CDD" id="cd07942">
    <property type="entry name" value="DRE_TIM_LeuA"/>
    <property type="match status" value="1"/>
</dbReference>
<dbReference type="Gene3D" id="3.30.160.270">
    <property type="match status" value="1"/>
</dbReference>
<dbReference type="Gene3D" id="3.20.20.70">
    <property type="entry name" value="Aldolase class I"/>
    <property type="match status" value="1"/>
</dbReference>
<dbReference type="HAMAP" id="MF_00572">
    <property type="entry name" value="LeuA_type2"/>
    <property type="match status" value="1"/>
</dbReference>
<dbReference type="InterPro" id="IPR013709">
    <property type="entry name" value="2-isopropylmalate_synth_dimer"/>
</dbReference>
<dbReference type="InterPro" id="IPR002034">
    <property type="entry name" value="AIPM/Hcit_synth_CS"/>
</dbReference>
<dbReference type="InterPro" id="IPR013785">
    <property type="entry name" value="Aldolase_TIM"/>
</dbReference>
<dbReference type="InterPro" id="IPR005668">
    <property type="entry name" value="IPM_Synthase"/>
</dbReference>
<dbReference type="InterPro" id="IPR054692">
    <property type="entry name" value="LeuA-like_post-cat"/>
</dbReference>
<dbReference type="InterPro" id="IPR036230">
    <property type="entry name" value="LeuA_allosteric_dom_sf"/>
</dbReference>
<dbReference type="InterPro" id="IPR039371">
    <property type="entry name" value="LeuA_N_DRE-TIM"/>
</dbReference>
<dbReference type="InterPro" id="IPR000891">
    <property type="entry name" value="PYR_CT"/>
</dbReference>
<dbReference type="NCBIfam" id="TIGR00970">
    <property type="entry name" value="leuA_yeast"/>
    <property type="match status" value="1"/>
</dbReference>
<dbReference type="NCBIfam" id="NF002991">
    <property type="entry name" value="PRK03739.1"/>
    <property type="match status" value="1"/>
</dbReference>
<dbReference type="PANTHER" id="PTHR46911">
    <property type="match status" value="1"/>
</dbReference>
<dbReference type="PANTHER" id="PTHR46911:SF1">
    <property type="entry name" value="2-ISOPROPYLMALATE SYNTHASE"/>
    <property type="match status" value="1"/>
</dbReference>
<dbReference type="Pfam" id="PF00682">
    <property type="entry name" value="HMGL-like"/>
    <property type="match status" value="1"/>
</dbReference>
<dbReference type="Pfam" id="PF22615">
    <property type="entry name" value="IPMS_D2"/>
    <property type="match status" value="1"/>
</dbReference>
<dbReference type="Pfam" id="PF08502">
    <property type="entry name" value="LeuA_dimer"/>
    <property type="match status" value="1"/>
</dbReference>
<dbReference type="SMART" id="SM00917">
    <property type="entry name" value="LeuA_dimer"/>
    <property type="match status" value="1"/>
</dbReference>
<dbReference type="SUPFAM" id="SSF110921">
    <property type="entry name" value="2-isopropylmalate synthase LeuA, allosteric (dimerisation) domain"/>
    <property type="match status" value="1"/>
</dbReference>
<dbReference type="SUPFAM" id="SSF51569">
    <property type="entry name" value="Aldolase"/>
    <property type="match status" value="1"/>
</dbReference>
<dbReference type="SUPFAM" id="SSF89000">
    <property type="entry name" value="post-HMGL domain-like"/>
    <property type="match status" value="1"/>
</dbReference>
<dbReference type="PROSITE" id="PS00815">
    <property type="entry name" value="AIPM_HOMOCIT_SYNTH_1"/>
    <property type="match status" value="1"/>
</dbReference>
<dbReference type="PROSITE" id="PS00816">
    <property type="entry name" value="AIPM_HOMOCIT_SYNTH_2"/>
    <property type="match status" value="1"/>
</dbReference>
<dbReference type="PROSITE" id="PS50991">
    <property type="entry name" value="PYR_CT"/>
    <property type="match status" value="1"/>
</dbReference>
<reference key="1">
    <citation type="journal article" date="2008" name="Proc. Natl. Acad. Sci. U.S.A.">
        <title>The genome sequence of Bifidobacterium longum subsp. infantis reveals adaptations for milk utilization within the infant microbiome.</title>
        <authorList>
            <person name="Sela D.A."/>
            <person name="Chapman J."/>
            <person name="Adeuya A."/>
            <person name="Kim J.H."/>
            <person name="Chen F."/>
            <person name="Whitehead T.R."/>
            <person name="Lapidus A."/>
            <person name="Rokhsar D.S."/>
            <person name="Lebrilla C.B."/>
            <person name="German J.B."/>
            <person name="Price N.P."/>
            <person name="Richardson P.M."/>
            <person name="Mills D.A."/>
        </authorList>
    </citation>
    <scope>NUCLEOTIDE SEQUENCE [LARGE SCALE GENOMIC DNA]</scope>
    <source>
        <strain>ATCC 15697 / DSM 20088 / JCM 1222 / NCTC 11817 / S12</strain>
    </source>
</reference>
<reference key="2">
    <citation type="journal article" date="2011" name="Nature">
        <title>Bifidobacteria can protect from enteropathogenic infection through production of acetate.</title>
        <authorList>
            <person name="Fukuda S."/>
            <person name="Toh H."/>
            <person name="Hase K."/>
            <person name="Oshima K."/>
            <person name="Nakanishi Y."/>
            <person name="Yoshimura K."/>
            <person name="Tobe T."/>
            <person name="Clarke J.M."/>
            <person name="Topping D.L."/>
            <person name="Suzuki T."/>
            <person name="Taylor T.D."/>
            <person name="Itoh K."/>
            <person name="Kikuchi J."/>
            <person name="Morita H."/>
            <person name="Hattori M."/>
            <person name="Ohno H."/>
        </authorList>
    </citation>
    <scope>NUCLEOTIDE SEQUENCE [LARGE SCALE GENOMIC DNA]</scope>
    <source>
        <strain>ATCC 15697 / DSM 20088 / JCM 1222 / NCTC 11817 / S12</strain>
    </source>
</reference>
<evidence type="ECO:0000255" key="1">
    <source>
        <dbReference type="HAMAP-Rule" id="MF_00572"/>
    </source>
</evidence>
<accession>B7GT76</accession>
<accession>E8MNG1</accession>
<organism>
    <name type="scientific">Bifidobacterium longum subsp. infantis (strain ATCC 15697 / DSM 20088 / JCM 1222 / NCTC 11817 / S12)</name>
    <dbReference type="NCBI Taxonomy" id="391904"/>
    <lineage>
        <taxon>Bacteria</taxon>
        <taxon>Bacillati</taxon>
        <taxon>Actinomycetota</taxon>
        <taxon>Actinomycetes</taxon>
        <taxon>Bifidobacteriales</taxon>
        <taxon>Bifidobacteriaceae</taxon>
        <taxon>Bifidobacterium</taxon>
    </lineage>
</organism>